<evidence type="ECO:0000250" key="1"/>
<evidence type="ECO:0000250" key="2">
    <source>
        <dbReference type="UniProtKB" id="P68425"/>
    </source>
</evidence>
<evidence type="ECO:0000255" key="3"/>
<evidence type="ECO:0000255" key="4">
    <source>
        <dbReference type="PROSITE-ProRule" id="PRU00031"/>
    </source>
</evidence>
<evidence type="ECO:0000303" key="5">
    <source>
    </source>
</evidence>
<evidence type="ECO:0000305" key="6"/>
<evidence type="ECO:0000305" key="7">
    <source>
    </source>
</evidence>
<comment type="function">
    <text evidence="2">Serine protease inhibitor that inhibits trypsin at a molar ratio of 1:1.</text>
</comment>
<comment type="subcellular location">
    <subcellularLocation>
        <location evidence="7">Secreted</location>
    </subcellularLocation>
</comment>
<comment type="tissue specificity">
    <text evidence="7">Expressed by the venom gland.</text>
</comment>
<comment type="similarity">
    <text evidence="6">Belongs to the venom Kunitz-type family. 03 (sub-Kunitz) subfamily.</text>
</comment>
<sequence>MGTARFLRAVLLLSVLLMVTFPALLSAEHHDGRVDICRLPSDSGDCLRFFEMWYFDGTTCTKFVYGGYGGNDNRFPTEKACMKRCAKA</sequence>
<accession>P0DJ70</accession>
<feature type="signal peptide" evidence="3">
    <location>
        <begin position="1"/>
        <end position="27"/>
    </location>
</feature>
<feature type="propeptide" id="PRO_0000413815" evidence="1">
    <location>
        <begin position="28"/>
        <end position="33"/>
    </location>
</feature>
<feature type="chain" id="PRO_0000413816" description="Kunitz-type U15-theraphotoxin-Hhn1a">
    <location>
        <begin position="34"/>
        <end position="88"/>
    </location>
</feature>
<feature type="domain" description="BPTI/Kunitz inhibitor" evidence="4">
    <location>
        <begin position="37"/>
        <end position="85"/>
    </location>
</feature>
<feature type="site" description="May bind Kv1" evidence="1">
    <location>
        <position position="39"/>
    </location>
</feature>
<feature type="site" description="Reactive bond for chymotrypsin" evidence="1">
    <location>
        <begin position="47"/>
        <end position="48"/>
    </location>
</feature>
<feature type="disulfide bond" evidence="4">
    <location>
        <begin position="37"/>
        <end position="85"/>
    </location>
</feature>
<feature type="disulfide bond" evidence="4">
    <location>
        <begin position="60"/>
        <end position="81"/>
    </location>
</feature>
<organism>
    <name type="scientific">Cyriopagopus hainanus</name>
    <name type="common">Chinese bird spider</name>
    <name type="synonym">Haplopelma hainanum</name>
    <dbReference type="NCBI Taxonomy" id="209901"/>
    <lineage>
        <taxon>Eukaryota</taxon>
        <taxon>Metazoa</taxon>
        <taxon>Ecdysozoa</taxon>
        <taxon>Arthropoda</taxon>
        <taxon>Chelicerata</taxon>
        <taxon>Arachnida</taxon>
        <taxon>Araneae</taxon>
        <taxon>Mygalomorphae</taxon>
        <taxon>Theraphosidae</taxon>
        <taxon>Haplopelma</taxon>
    </lineage>
</organism>
<dbReference type="SMR" id="P0DJ70"/>
<dbReference type="ArachnoServer" id="AS002024">
    <property type="toxin name" value="U15-theraphotoxin-Hhn1a"/>
</dbReference>
<dbReference type="GO" id="GO:0005615">
    <property type="term" value="C:extracellular space"/>
    <property type="evidence" value="ECO:0007669"/>
    <property type="project" value="TreeGrafter"/>
</dbReference>
<dbReference type="GO" id="GO:0015459">
    <property type="term" value="F:potassium channel regulator activity"/>
    <property type="evidence" value="ECO:0007669"/>
    <property type="project" value="UniProtKB-KW"/>
</dbReference>
<dbReference type="GO" id="GO:0004867">
    <property type="term" value="F:serine-type endopeptidase inhibitor activity"/>
    <property type="evidence" value="ECO:0007669"/>
    <property type="project" value="UniProtKB-KW"/>
</dbReference>
<dbReference type="GO" id="GO:0090729">
    <property type="term" value="F:toxin activity"/>
    <property type="evidence" value="ECO:0007669"/>
    <property type="project" value="UniProtKB-KW"/>
</dbReference>
<dbReference type="GO" id="GO:0044562">
    <property type="term" value="P:envenomation resulting in negative regulation of voltage-gated potassium channel activity in another organism"/>
    <property type="evidence" value="ECO:0007669"/>
    <property type="project" value="UniProtKB-ARBA"/>
</dbReference>
<dbReference type="CDD" id="cd22598">
    <property type="entry name" value="Kunitz_huwentoxin"/>
    <property type="match status" value="1"/>
</dbReference>
<dbReference type="FunFam" id="4.10.410.10:FF:000020">
    <property type="entry name" value="Collagen, type VI, alpha 3"/>
    <property type="match status" value="1"/>
</dbReference>
<dbReference type="Gene3D" id="4.10.410.10">
    <property type="entry name" value="Pancreatic trypsin inhibitor Kunitz domain"/>
    <property type="match status" value="1"/>
</dbReference>
<dbReference type="InterPro" id="IPR002223">
    <property type="entry name" value="Kunitz_BPTI"/>
</dbReference>
<dbReference type="InterPro" id="IPR036880">
    <property type="entry name" value="Kunitz_BPTI_sf"/>
</dbReference>
<dbReference type="InterPro" id="IPR050098">
    <property type="entry name" value="TFPI/VKTCI-like"/>
</dbReference>
<dbReference type="PANTHER" id="PTHR10083">
    <property type="entry name" value="KUNITZ-TYPE PROTEASE INHIBITOR-RELATED"/>
    <property type="match status" value="1"/>
</dbReference>
<dbReference type="PANTHER" id="PTHR10083:SF328">
    <property type="entry name" value="TISSUE FACTOR PATHWAY INHIBITOR"/>
    <property type="match status" value="1"/>
</dbReference>
<dbReference type="Pfam" id="PF00014">
    <property type="entry name" value="Kunitz_BPTI"/>
    <property type="match status" value="1"/>
</dbReference>
<dbReference type="PRINTS" id="PR00759">
    <property type="entry name" value="BASICPTASE"/>
</dbReference>
<dbReference type="SMART" id="SM00131">
    <property type="entry name" value="KU"/>
    <property type="match status" value="1"/>
</dbReference>
<dbReference type="SUPFAM" id="SSF57362">
    <property type="entry name" value="BPTI-like"/>
    <property type="match status" value="1"/>
</dbReference>
<dbReference type="PROSITE" id="PS50279">
    <property type="entry name" value="BPTI_KUNITZ_2"/>
    <property type="match status" value="1"/>
</dbReference>
<name>VKT53_CYRHA</name>
<protein>
    <recommendedName>
        <fullName>Kunitz-type U15-theraphotoxin-Hhn1a</fullName>
        <shortName>U15-TRTX-Hhn1a</shortName>
    </recommendedName>
    <alternativeName>
        <fullName evidence="5">Kunitz-type serine protease inhibitor HNTX-853</fullName>
    </alternativeName>
</protein>
<reference key="1">
    <citation type="journal article" date="2008" name="PLoS ONE">
        <title>Discovery of a distinct superfamily of Kunitz-type toxin (KTT) from tarantulas.</title>
        <authorList>
            <person name="Yuan C.-H."/>
            <person name="He Q.-Y."/>
            <person name="Peng K."/>
            <person name="Diao J.-B."/>
            <person name="Jiang L.-P."/>
            <person name="Tang X."/>
            <person name="Liang S.-P."/>
        </authorList>
    </citation>
    <scope>NUCLEOTIDE SEQUENCE [MRNA]</scope>
    <source>
        <tissue>Venom gland</tissue>
    </source>
</reference>
<proteinExistence type="inferred from homology"/>
<keyword id="KW-1015">Disulfide bond</keyword>
<keyword id="KW-0646">Protease inhibitor</keyword>
<keyword id="KW-0964">Secreted</keyword>
<keyword id="KW-0722">Serine protease inhibitor</keyword>
<keyword id="KW-0732">Signal</keyword>